<dbReference type="EMBL" id="AF202533">
    <property type="protein sequence ID" value="AAF26366.1"/>
    <property type="molecule type" value="mRNA"/>
</dbReference>
<dbReference type="EMBL" id="AK158110">
    <property type="protein sequence ID" value="BAE34360.1"/>
    <property type="molecule type" value="mRNA"/>
</dbReference>
<dbReference type="EMBL" id="AL935159">
    <property type="status" value="NOT_ANNOTATED_CDS"/>
    <property type="molecule type" value="Genomic_DNA"/>
</dbReference>
<dbReference type="EMBL" id="BC104388">
    <property type="protein sequence ID" value="AAI04389.1"/>
    <property type="molecule type" value="mRNA"/>
</dbReference>
<dbReference type="EMBL" id="BC104389">
    <property type="protein sequence ID" value="AAI04390.2"/>
    <property type="status" value="ALT_FRAME"/>
    <property type="molecule type" value="mRNA"/>
</dbReference>
<dbReference type="CCDS" id="CCDS16199.1">
    <molecule id="Q9JL95-1"/>
</dbReference>
<dbReference type="RefSeq" id="NP_058610.1">
    <molecule id="Q9JL95-1"/>
    <property type="nucleotide sequence ID" value="NM_016914.2"/>
</dbReference>
<dbReference type="RefSeq" id="XP_006499964.1">
    <property type="nucleotide sequence ID" value="XM_006499901.1"/>
</dbReference>
<dbReference type="RefSeq" id="XP_036018284.1">
    <molecule id="Q9JL95-1"/>
    <property type="nucleotide sequence ID" value="XM_036162391.1"/>
</dbReference>
<dbReference type="SMR" id="Q9JL95"/>
<dbReference type="FunCoup" id="Q9JL95">
    <property type="interactions" value="13"/>
</dbReference>
<dbReference type="STRING" id="10090.ENSMUSP00000028466"/>
<dbReference type="MEROPS" id="I63.001"/>
<dbReference type="PhosphoSitePlus" id="Q9JL95"/>
<dbReference type="PaxDb" id="10090-ENSMUSP00000028466"/>
<dbReference type="ProteomicsDB" id="289407">
    <molecule id="Q9JL95-1"/>
</dbReference>
<dbReference type="ProteomicsDB" id="289408">
    <molecule id="Q9JL95-3"/>
</dbReference>
<dbReference type="Antibodypedia" id="27347">
    <property type="antibodies" value="39 antibodies from 14 providers"/>
</dbReference>
<dbReference type="DNASU" id="53856"/>
<dbReference type="Ensembl" id="ENSMUST00000028466.12">
    <molecule id="Q9JL95-1"/>
    <property type="protein sequence ID" value="ENSMUSP00000028466.6"/>
    <property type="gene ID" value="ENSMUSG00000027072.14"/>
</dbReference>
<dbReference type="GeneID" id="53856"/>
<dbReference type="KEGG" id="mmu:53856"/>
<dbReference type="UCSC" id="uc008kjq.1">
    <molecule id="Q9JL95-1"/>
    <property type="organism name" value="mouse"/>
</dbReference>
<dbReference type="AGR" id="MGI:1858200"/>
<dbReference type="CTD" id="10394"/>
<dbReference type="MGI" id="MGI:1858200">
    <property type="gene designation" value="Prg3"/>
</dbReference>
<dbReference type="VEuPathDB" id="HostDB:ENSMUSG00000027072"/>
<dbReference type="eggNOG" id="KOG4297">
    <property type="taxonomic scope" value="Eukaryota"/>
</dbReference>
<dbReference type="GeneTree" id="ENSGT00440000039859"/>
<dbReference type="HOGENOM" id="CLU_107200_1_0_1"/>
<dbReference type="InParanoid" id="Q9JL95"/>
<dbReference type="OMA" id="FCWTDGS"/>
<dbReference type="OrthoDB" id="6369810at2759"/>
<dbReference type="PhylomeDB" id="Q9JL95"/>
<dbReference type="TreeFam" id="TF336281"/>
<dbReference type="Reactome" id="R-MMU-6798695">
    <property type="pathway name" value="Neutrophil degranulation"/>
</dbReference>
<dbReference type="BioGRID-ORCS" id="53856">
    <property type="hits" value="2 hits in 79 CRISPR screens"/>
</dbReference>
<dbReference type="PRO" id="PR:Q9JL95"/>
<dbReference type="Proteomes" id="UP000000589">
    <property type="component" value="Chromosome 2"/>
</dbReference>
<dbReference type="RNAct" id="Q9JL95">
    <property type="molecule type" value="protein"/>
</dbReference>
<dbReference type="Bgee" id="ENSMUSG00000027072">
    <property type="expression patterns" value="Expressed in peripheral lymph node and 18 other cell types or tissues"/>
</dbReference>
<dbReference type="GO" id="GO:0030246">
    <property type="term" value="F:carbohydrate binding"/>
    <property type="evidence" value="ECO:0007669"/>
    <property type="project" value="UniProtKB-KW"/>
</dbReference>
<dbReference type="GO" id="GO:0045575">
    <property type="term" value="P:basophil activation"/>
    <property type="evidence" value="ECO:0007669"/>
    <property type="project" value="Ensembl"/>
</dbReference>
<dbReference type="GO" id="GO:0001694">
    <property type="term" value="P:histamine biosynthetic process"/>
    <property type="evidence" value="ECO:0007669"/>
    <property type="project" value="Ensembl"/>
</dbReference>
<dbReference type="GO" id="GO:0006955">
    <property type="term" value="P:immune response"/>
    <property type="evidence" value="ECO:0007669"/>
    <property type="project" value="InterPro"/>
</dbReference>
<dbReference type="GO" id="GO:0019370">
    <property type="term" value="P:leukotriene biosynthetic process"/>
    <property type="evidence" value="ECO:0007669"/>
    <property type="project" value="Ensembl"/>
</dbReference>
<dbReference type="GO" id="GO:0017148">
    <property type="term" value="P:negative regulation of translation"/>
    <property type="evidence" value="ECO:0007669"/>
    <property type="project" value="Ensembl"/>
</dbReference>
<dbReference type="GO" id="GO:0042119">
    <property type="term" value="P:neutrophil activation"/>
    <property type="evidence" value="ECO:0007669"/>
    <property type="project" value="Ensembl"/>
</dbReference>
<dbReference type="GO" id="GO:0032757">
    <property type="term" value="P:positive regulation of interleukin-8 production"/>
    <property type="evidence" value="ECO:0007669"/>
    <property type="project" value="Ensembl"/>
</dbReference>
<dbReference type="GO" id="GO:0042554">
    <property type="term" value="P:superoxide anion generation"/>
    <property type="evidence" value="ECO:0007669"/>
    <property type="project" value="Ensembl"/>
</dbReference>
<dbReference type="CDD" id="cd03598">
    <property type="entry name" value="CLECT_EMBP_like"/>
    <property type="match status" value="1"/>
</dbReference>
<dbReference type="FunFam" id="3.10.100.10:FF:000090">
    <property type="entry name" value="Proteoglycan 2, bone marrow"/>
    <property type="match status" value="1"/>
</dbReference>
<dbReference type="Gene3D" id="3.10.100.10">
    <property type="entry name" value="Mannose-Binding Protein A, subunit A"/>
    <property type="match status" value="1"/>
</dbReference>
<dbReference type="InterPro" id="IPR001304">
    <property type="entry name" value="C-type_lectin-like"/>
</dbReference>
<dbReference type="InterPro" id="IPR016186">
    <property type="entry name" value="C-type_lectin-like/link_sf"/>
</dbReference>
<dbReference type="InterPro" id="IPR018378">
    <property type="entry name" value="C-type_lectin_CS"/>
</dbReference>
<dbReference type="InterPro" id="IPR016187">
    <property type="entry name" value="CTDL_fold"/>
</dbReference>
<dbReference type="InterPro" id="IPR033816">
    <property type="entry name" value="EMBP_CTLD"/>
</dbReference>
<dbReference type="InterPro" id="IPR002352">
    <property type="entry name" value="Eosinophil_major_basic"/>
</dbReference>
<dbReference type="InterPro" id="IPR050976">
    <property type="entry name" value="Snaclec"/>
</dbReference>
<dbReference type="PANTHER" id="PTHR22991">
    <property type="entry name" value="PROTEIN CBG13490"/>
    <property type="match status" value="1"/>
</dbReference>
<dbReference type="PANTHER" id="PTHR22991:SF40">
    <property type="entry name" value="PROTEIN CBG13490"/>
    <property type="match status" value="1"/>
</dbReference>
<dbReference type="Pfam" id="PF00059">
    <property type="entry name" value="Lectin_C"/>
    <property type="match status" value="1"/>
</dbReference>
<dbReference type="PRINTS" id="PR00770">
    <property type="entry name" value="EMAJORBASICP"/>
</dbReference>
<dbReference type="SMART" id="SM00034">
    <property type="entry name" value="CLECT"/>
    <property type="match status" value="1"/>
</dbReference>
<dbReference type="SUPFAM" id="SSF56436">
    <property type="entry name" value="C-type lectin-like"/>
    <property type="match status" value="1"/>
</dbReference>
<dbReference type="PROSITE" id="PS00615">
    <property type="entry name" value="C_TYPE_LECTIN_1"/>
    <property type="match status" value="1"/>
</dbReference>
<dbReference type="PROSITE" id="PS50041">
    <property type="entry name" value="C_TYPE_LECTIN_2"/>
    <property type="match status" value="1"/>
</dbReference>
<accession>Q9JL95</accession>
<accession>A2AW01</accession>
<accession>Q3SXA9</accession>
<evidence type="ECO:0000250" key="1"/>
<evidence type="ECO:0000255" key="2"/>
<evidence type="ECO:0000255" key="3">
    <source>
        <dbReference type="PROSITE-ProRule" id="PRU00040"/>
    </source>
</evidence>
<evidence type="ECO:0000256" key="4">
    <source>
        <dbReference type="SAM" id="MobiDB-lite"/>
    </source>
</evidence>
<evidence type="ECO:0000269" key="5">
    <source>
    </source>
</evidence>
<evidence type="ECO:0000303" key="6">
    <source>
    </source>
</evidence>
<evidence type="ECO:0000305" key="7"/>
<evidence type="ECO:0000312" key="8">
    <source>
        <dbReference type="EMBL" id="AAF26366.1"/>
    </source>
</evidence>
<evidence type="ECO:0000312" key="9">
    <source>
        <dbReference type="EMBL" id="AAI04389.1"/>
    </source>
</evidence>
<evidence type="ECO:0000312" key="10">
    <source>
        <dbReference type="EMBL" id="BAE34360.1"/>
    </source>
</evidence>
<evidence type="ECO:0000312" key="11">
    <source>
        <dbReference type="MGI" id="MGI:1858200"/>
    </source>
</evidence>
<reference evidence="7 8" key="1">
    <citation type="journal article" date="2000" name="J. Leukoc. Biol.">
        <title>Identification of a new murine eosinophil major basic protein (mMBP) gene: cloning and characterization of mMBP-2.</title>
        <authorList>
            <person name="Macias M.P."/>
            <person name="Welch K.C."/>
            <person name="Denzler K.L."/>
            <person name="Larson K.A."/>
            <person name="Lee N.A."/>
            <person name="Lee J.J."/>
        </authorList>
    </citation>
    <scope>NUCLEOTIDE SEQUENCE [MRNA] (ISOFORM 1)</scope>
    <scope>TISSUE SPECIFICITY</scope>
    <scope>SUBCELLULAR LOCATION</scope>
    <source>
        <strain evidence="8">C57BL/6J</strain>
        <tissue evidence="8">Bone marrow</tissue>
    </source>
</reference>
<reference evidence="7 10" key="2">
    <citation type="journal article" date="2005" name="Science">
        <title>The transcriptional landscape of the mammalian genome.</title>
        <authorList>
            <person name="Carninci P."/>
            <person name="Kasukawa T."/>
            <person name="Katayama S."/>
            <person name="Gough J."/>
            <person name="Frith M.C."/>
            <person name="Maeda N."/>
            <person name="Oyama R."/>
            <person name="Ravasi T."/>
            <person name="Lenhard B."/>
            <person name="Wells C."/>
            <person name="Kodzius R."/>
            <person name="Shimokawa K."/>
            <person name="Bajic V.B."/>
            <person name="Brenner S.E."/>
            <person name="Batalov S."/>
            <person name="Forrest A.R."/>
            <person name="Zavolan M."/>
            <person name="Davis M.J."/>
            <person name="Wilming L.G."/>
            <person name="Aidinis V."/>
            <person name="Allen J.E."/>
            <person name="Ambesi-Impiombato A."/>
            <person name="Apweiler R."/>
            <person name="Aturaliya R.N."/>
            <person name="Bailey T.L."/>
            <person name="Bansal M."/>
            <person name="Baxter L."/>
            <person name="Beisel K.W."/>
            <person name="Bersano T."/>
            <person name="Bono H."/>
            <person name="Chalk A.M."/>
            <person name="Chiu K.P."/>
            <person name="Choudhary V."/>
            <person name="Christoffels A."/>
            <person name="Clutterbuck D.R."/>
            <person name="Crowe M.L."/>
            <person name="Dalla E."/>
            <person name="Dalrymple B.P."/>
            <person name="de Bono B."/>
            <person name="Della Gatta G."/>
            <person name="di Bernardo D."/>
            <person name="Down T."/>
            <person name="Engstrom P."/>
            <person name="Fagiolini M."/>
            <person name="Faulkner G."/>
            <person name="Fletcher C.F."/>
            <person name="Fukushima T."/>
            <person name="Furuno M."/>
            <person name="Futaki S."/>
            <person name="Gariboldi M."/>
            <person name="Georgii-Hemming P."/>
            <person name="Gingeras T.R."/>
            <person name="Gojobori T."/>
            <person name="Green R.E."/>
            <person name="Gustincich S."/>
            <person name="Harbers M."/>
            <person name="Hayashi Y."/>
            <person name="Hensch T.K."/>
            <person name="Hirokawa N."/>
            <person name="Hill D."/>
            <person name="Huminiecki L."/>
            <person name="Iacono M."/>
            <person name="Ikeo K."/>
            <person name="Iwama A."/>
            <person name="Ishikawa T."/>
            <person name="Jakt M."/>
            <person name="Kanapin A."/>
            <person name="Katoh M."/>
            <person name="Kawasawa Y."/>
            <person name="Kelso J."/>
            <person name="Kitamura H."/>
            <person name="Kitano H."/>
            <person name="Kollias G."/>
            <person name="Krishnan S.P."/>
            <person name="Kruger A."/>
            <person name="Kummerfeld S.K."/>
            <person name="Kurochkin I.V."/>
            <person name="Lareau L.F."/>
            <person name="Lazarevic D."/>
            <person name="Lipovich L."/>
            <person name="Liu J."/>
            <person name="Liuni S."/>
            <person name="McWilliam S."/>
            <person name="Madan Babu M."/>
            <person name="Madera M."/>
            <person name="Marchionni L."/>
            <person name="Matsuda H."/>
            <person name="Matsuzawa S."/>
            <person name="Miki H."/>
            <person name="Mignone F."/>
            <person name="Miyake S."/>
            <person name="Morris K."/>
            <person name="Mottagui-Tabar S."/>
            <person name="Mulder N."/>
            <person name="Nakano N."/>
            <person name="Nakauchi H."/>
            <person name="Ng P."/>
            <person name="Nilsson R."/>
            <person name="Nishiguchi S."/>
            <person name="Nishikawa S."/>
            <person name="Nori F."/>
            <person name="Ohara O."/>
            <person name="Okazaki Y."/>
            <person name="Orlando V."/>
            <person name="Pang K.C."/>
            <person name="Pavan W.J."/>
            <person name="Pavesi G."/>
            <person name="Pesole G."/>
            <person name="Petrovsky N."/>
            <person name="Piazza S."/>
            <person name="Reed J."/>
            <person name="Reid J.F."/>
            <person name="Ring B.Z."/>
            <person name="Ringwald M."/>
            <person name="Rost B."/>
            <person name="Ruan Y."/>
            <person name="Salzberg S.L."/>
            <person name="Sandelin A."/>
            <person name="Schneider C."/>
            <person name="Schoenbach C."/>
            <person name="Sekiguchi K."/>
            <person name="Semple C.A."/>
            <person name="Seno S."/>
            <person name="Sessa L."/>
            <person name="Sheng Y."/>
            <person name="Shibata Y."/>
            <person name="Shimada H."/>
            <person name="Shimada K."/>
            <person name="Silva D."/>
            <person name="Sinclair B."/>
            <person name="Sperling S."/>
            <person name="Stupka E."/>
            <person name="Sugiura K."/>
            <person name="Sultana R."/>
            <person name="Takenaka Y."/>
            <person name="Taki K."/>
            <person name="Tammoja K."/>
            <person name="Tan S.L."/>
            <person name="Tang S."/>
            <person name="Taylor M.S."/>
            <person name="Tegner J."/>
            <person name="Teichmann S.A."/>
            <person name="Ueda H.R."/>
            <person name="van Nimwegen E."/>
            <person name="Verardo R."/>
            <person name="Wei C.L."/>
            <person name="Yagi K."/>
            <person name="Yamanishi H."/>
            <person name="Zabarovsky E."/>
            <person name="Zhu S."/>
            <person name="Zimmer A."/>
            <person name="Hide W."/>
            <person name="Bult C."/>
            <person name="Grimmond S.M."/>
            <person name="Teasdale R.D."/>
            <person name="Liu E.T."/>
            <person name="Brusic V."/>
            <person name="Quackenbush J."/>
            <person name="Wahlestedt C."/>
            <person name="Mattick J.S."/>
            <person name="Hume D.A."/>
            <person name="Kai C."/>
            <person name="Sasaki D."/>
            <person name="Tomaru Y."/>
            <person name="Fukuda S."/>
            <person name="Kanamori-Katayama M."/>
            <person name="Suzuki M."/>
            <person name="Aoki J."/>
            <person name="Arakawa T."/>
            <person name="Iida J."/>
            <person name="Imamura K."/>
            <person name="Itoh M."/>
            <person name="Kato T."/>
            <person name="Kawaji H."/>
            <person name="Kawagashira N."/>
            <person name="Kawashima T."/>
            <person name="Kojima M."/>
            <person name="Kondo S."/>
            <person name="Konno H."/>
            <person name="Nakano K."/>
            <person name="Ninomiya N."/>
            <person name="Nishio T."/>
            <person name="Okada M."/>
            <person name="Plessy C."/>
            <person name="Shibata K."/>
            <person name="Shiraki T."/>
            <person name="Suzuki S."/>
            <person name="Tagami M."/>
            <person name="Waki K."/>
            <person name="Watahiki A."/>
            <person name="Okamura-Oho Y."/>
            <person name="Suzuki H."/>
            <person name="Kawai J."/>
            <person name="Hayashizaki Y."/>
        </authorList>
    </citation>
    <scope>NUCLEOTIDE SEQUENCE [LARGE SCALE MRNA] (ISOFORM 1)</scope>
    <source>
        <strain evidence="10">C57BL/6J</strain>
        <tissue evidence="10">Inner ear</tissue>
    </source>
</reference>
<reference key="3">
    <citation type="journal article" date="2009" name="PLoS Biol.">
        <title>Lineage-specific biology revealed by a finished genome assembly of the mouse.</title>
        <authorList>
            <person name="Church D.M."/>
            <person name="Goodstadt L."/>
            <person name="Hillier L.W."/>
            <person name="Zody M.C."/>
            <person name="Goldstein S."/>
            <person name="She X."/>
            <person name="Bult C.J."/>
            <person name="Agarwala R."/>
            <person name="Cherry J.L."/>
            <person name="DiCuccio M."/>
            <person name="Hlavina W."/>
            <person name="Kapustin Y."/>
            <person name="Meric P."/>
            <person name="Maglott D."/>
            <person name="Birtle Z."/>
            <person name="Marques A.C."/>
            <person name="Graves T."/>
            <person name="Zhou S."/>
            <person name="Teague B."/>
            <person name="Potamousis K."/>
            <person name="Churas C."/>
            <person name="Place M."/>
            <person name="Herschleb J."/>
            <person name="Runnheim R."/>
            <person name="Forrest D."/>
            <person name="Amos-Landgraf J."/>
            <person name="Schwartz D.C."/>
            <person name="Cheng Z."/>
            <person name="Lindblad-Toh K."/>
            <person name="Eichler E.E."/>
            <person name="Ponting C.P."/>
        </authorList>
    </citation>
    <scope>NUCLEOTIDE SEQUENCE [LARGE SCALE GENOMIC DNA]</scope>
    <source>
        <strain>C57BL/6J</strain>
    </source>
</reference>
<reference evidence="7 9" key="4">
    <citation type="journal article" date="2004" name="Genome Res.">
        <title>The status, quality, and expansion of the NIH full-length cDNA project: the Mammalian Gene Collection (MGC).</title>
        <authorList>
            <consortium name="The MGC Project Team"/>
        </authorList>
    </citation>
    <scope>NUCLEOTIDE SEQUENCE [LARGE SCALE MRNA] (ISOFORMS 1 AND 2)</scope>
</reference>
<feature type="signal peptide" evidence="2">
    <location>
        <begin position="1"/>
        <end position="17"/>
    </location>
</feature>
<feature type="chain" id="PRO_0000248860" description="Proteoglycan 3" evidence="2">
    <location>
        <begin position="18"/>
        <end position="222"/>
    </location>
</feature>
<feature type="domain" description="C-type lectin" evidence="3">
    <location>
        <begin position="105"/>
        <end position="221"/>
    </location>
</feature>
<feature type="region of interest" description="Disordered" evidence="4">
    <location>
        <begin position="27"/>
        <end position="100"/>
    </location>
</feature>
<feature type="compositionally biased region" description="Basic and acidic residues" evidence="4">
    <location>
        <begin position="27"/>
        <end position="46"/>
    </location>
</feature>
<feature type="compositionally biased region" description="Acidic residues" evidence="4">
    <location>
        <begin position="71"/>
        <end position="81"/>
    </location>
</feature>
<feature type="compositionally biased region" description="Basic and acidic residues" evidence="4">
    <location>
        <begin position="83"/>
        <end position="97"/>
    </location>
</feature>
<feature type="disulfide bond" evidence="3">
    <location>
        <begin position="126"/>
        <end position="220"/>
    </location>
</feature>
<feature type="disulfide bond" evidence="3">
    <location>
        <begin position="197"/>
        <end position="212"/>
    </location>
</feature>
<feature type="splice variant" id="VSP_034564" description="In isoform 2." evidence="6">
    <location>
        <begin position="22"/>
        <end position="123"/>
    </location>
</feature>
<name>PRG3_MOUSE</name>
<comment type="function">
    <text evidence="1">Possesses similar cytotoxic and cytostimulatory activities to PRG2/MBP.</text>
</comment>
<comment type="subcellular location">
    <text evidence="5">Localized to the eosinophil secondary granule.</text>
</comment>
<comment type="alternative products">
    <event type="alternative splicing"/>
    <isoform>
        <id>Q9JL95-1</id>
        <name evidence="5">1</name>
        <sequence type="displayed"/>
    </isoform>
    <isoform>
        <id>Q9JL95-3</id>
        <name>2</name>
        <sequence type="described" ref="VSP_034564"/>
    </isoform>
</comment>
<comment type="tissue specificity">
    <text evidence="5">Expressed in bone marrow, spleen, and thymus. Not detected in heart, liver or lung.</text>
</comment>
<comment type="sequence caution" evidence="7">
    <conflict type="frameshift">
        <sequence resource="EMBL-CDS" id="AAI04390"/>
    </conflict>
</comment>
<comment type="online information" name="Functional Glycomics Gateway - Glycan Binding">
    <link uri="http://www.functionalglycomics.org/glycomics/GBPServlet?&amp;operationType=view&amp;cbpId=cbp_mou_Ctlect_152"/>
    <text>Eosinophil major basic protein homolog</text>
</comment>
<proteinExistence type="evidence at transcript level"/>
<organism>
    <name type="scientific">Mus musculus</name>
    <name type="common">Mouse</name>
    <dbReference type="NCBI Taxonomy" id="10090"/>
    <lineage>
        <taxon>Eukaryota</taxon>
        <taxon>Metazoa</taxon>
        <taxon>Chordata</taxon>
        <taxon>Craniata</taxon>
        <taxon>Vertebrata</taxon>
        <taxon>Euteleostomi</taxon>
        <taxon>Mammalia</taxon>
        <taxon>Eutheria</taxon>
        <taxon>Euarchontoglires</taxon>
        <taxon>Glires</taxon>
        <taxon>Rodentia</taxon>
        <taxon>Myomorpha</taxon>
        <taxon>Muroidea</taxon>
        <taxon>Muridae</taxon>
        <taxon>Murinae</taxon>
        <taxon>Mus</taxon>
        <taxon>Mus</taxon>
    </lineage>
</organism>
<sequence length="222" mass="25204">MKQPLILSFLLLGMVSAFHLETAHLENPKREESLKQEADGSREQGRELALTQETKQTEGEEVEGSQHQDIFEDEEAMESDPDALNKDSACPKEEDTTHFQGTPGCKSCNYVLVRTPETFDKAQRVCRRCYRGNLASVHSYSFNYQIQNLARKINQSIVWIGGILRGWFWKKFCWMDGSCWDFGYWAPGQPGSGGGHCVTLCTKGGHWRRASCKSHLPFICSF</sequence>
<protein>
    <recommendedName>
        <fullName>Proteoglycan 3</fullName>
    </recommendedName>
    <alternativeName>
        <fullName>Eosinophil major basic protein 2</fullName>
    </alternativeName>
</protein>
<keyword id="KW-0025">Alternative splicing</keyword>
<keyword id="KW-1015">Disulfide bond</keyword>
<keyword id="KW-0430">Lectin</keyword>
<keyword id="KW-1185">Reference proteome</keyword>
<keyword id="KW-0732">Signal</keyword>
<gene>
    <name evidence="11" type="primary">Prg3</name>
    <name evidence="8" type="synonym">Mbp2</name>
</gene>